<proteinExistence type="inferred from homology"/>
<protein>
    <recommendedName>
        <fullName evidence="1">UPF0251 protein Athe_2281</fullName>
    </recommendedName>
</protein>
<sequence>MPRPIRCRRVEFLPRFNYFSPREGSNDEVQLKVEELEAIRLKDLEGLMQEECAQKMQVSRQTFQLILEEARKKVADALVNGKAIRIEGGNYVFGNCKYTCLNCGKVFELDKDECPECHSSQVVCHRGKGRGHCFRHHRGW</sequence>
<evidence type="ECO:0000255" key="1">
    <source>
        <dbReference type="HAMAP-Rule" id="MF_00674"/>
    </source>
</evidence>
<accession>B9MMQ3</accession>
<gene>
    <name type="ordered locus">Athe_2281</name>
</gene>
<reference key="1">
    <citation type="submission" date="2009-01" db="EMBL/GenBank/DDBJ databases">
        <title>Complete sequence of chromosome of Caldicellulosiruptor becscii DSM 6725.</title>
        <authorList>
            <person name="Lucas S."/>
            <person name="Copeland A."/>
            <person name="Lapidus A."/>
            <person name="Glavina del Rio T."/>
            <person name="Tice H."/>
            <person name="Bruce D."/>
            <person name="Goodwin L."/>
            <person name="Pitluck S."/>
            <person name="Sims D."/>
            <person name="Meincke L."/>
            <person name="Brettin T."/>
            <person name="Detter J.C."/>
            <person name="Han C."/>
            <person name="Larimer F."/>
            <person name="Land M."/>
            <person name="Hauser L."/>
            <person name="Kyrpides N."/>
            <person name="Ovchinnikova G."/>
            <person name="Kataeva I."/>
            <person name="Adams M.W.W."/>
        </authorList>
    </citation>
    <scope>NUCLEOTIDE SEQUENCE [LARGE SCALE GENOMIC DNA]</scope>
    <source>
        <strain>ATCC BAA-1888 / DSM 6725 / KCTC 15123 / Z-1320</strain>
    </source>
</reference>
<feature type="chain" id="PRO_1000147680" description="UPF0251 protein Athe_2281">
    <location>
        <begin position="1"/>
        <end position="140"/>
    </location>
</feature>
<comment type="similarity">
    <text evidence="1">Belongs to the UPF0251 family.</text>
</comment>
<organism>
    <name type="scientific">Caldicellulosiruptor bescii (strain ATCC BAA-1888 / DSM 6725 / KCTC 15123 / Z-1320)</name>
    <name type="common">Anaerocellum thermophilum</name>
    <dbReference type="NCBI Taxonomy" id="521460"/>
    <lineage>
        <taxon>Bacteria</taxon>
        <taxon>Bacillati</taxon>
        <taxon>Bacillota</taxon>
        <taxon>Bacillota incertae sedis</taxon>
        <taxon>Caldicellulosiruptorales</taxon>
        <taxon>Caldicellulosiruptoraceae</taxon>
        <taxon>Caldicellulosiruptor</taxon>
    </lineage>
</organism>
<dbReference type="EMBL" id="CP001393">
    <property type="protein sequence ID" value="ACM61352.1"/>
    <property type="molecule type" value="Genomic_DNA"/>
</dbReference>
<dbReference type="RefSeq" id="WP_015908611.1">
    <property type="nucleotide sequence ID" value="NC_012034.1"/>
</dbReference>
<dbReference type="STRING" id="521460.Athe_2281"/>
<dbReference type="GeneID" id="31773633"/>
<dbReference type="KEGG" id="ate:Athe_2281"/>
<dbReference type="eggNOG" id="COG1342">
    <property type="taxonomic scope" value="Bacteria"/>
</dbReference>
<dbReference type="HOGENOM" id="CLU_094511_0_1_9"/>
<dbReference type="Proteomes" id="UP000007723">
    <property type="component" value="Chromosome"/>
</dbReference>
<dbReference type="Gene3D" id="1.10.10.10">
    <property type="entry name" value="Winged helix-like DNA-binding domain superfamily/Winged helix DNA-binding domain"/>
    <property type="match status" value="1"/>
</dbReference>
<dbReference type="HAMAP" id="MF_00674">
    <property type="entry name" value="UPF0251"/>
    <property type="match status" value="1"/>
</dbReference>
<dbReference type="InterPro" id="IPR013324">
    <property type="entry name" value="RNA_pol_sigma_r3/r4-like"/>
</dbReference>
<dbReference type="InterPro" id="IPR002852">
    <property type="entry name" value="UPF0251"/>
</dbReference>
<dbReference type="InterPro" id="IPR036388">
    <property type="entry name" value="WH-like_DNA-bd_sf"/>
</dbReference>
<dbReference type="PANTHER" id="PTHR37478">
    <property type="match status" value="1"/>
</dbReference>
<dbReference type="PANTHER" id="PTHR37478:SF2">
    <property type="entry name" value="UPF0251 PROTEIN TK0562"/>
    <property type="match status" value="1"/>
</dbReference>
<dbReference type="Pfam" id="PF02001">
    <property type="entry name" value="DUF134"/>
    <property type="match status" value="1"/>
</dbReference>
<dbReference type="SUPFAM" id="SSF88659">
    <property type="entry name" value="Sigma3 and sigma4 domains of RNA polymerase sigma factors"/>
    <property type="match status" value="1"/>
</dbReference>
<name>Y2281_CALBD</name>